<reference key="1">
    <citation type="journal article" date="1999" name="Nature">
        <title>Evidence for lateral gene transfer between Archaea and Bacteria from genome sequence of Thermotoga maritima.</title>
        <authorList>
            <person name="Nelson K.E."/>
            <person name="Clayton R.A."/>
            <person name="Gill S.R."/>
            <person name="Gwinn M.L."/>
            <person name="Dodson R.J."/>
            <person name="Haft D.H."/>
            <person name="Hickey E.K."/>
            <person name="Peterson J.D."/>
            <person name="Nelson W.C."/>
            <person name="Ketchum K.A."/>
            <person name="McDonald L.A."/>
            <person name="Utterback T.R."/>
            <person name="Malek J.A."/>
            <person name="Linher K.D."/>
            <person name="Garrett M.M."/>
            <person name="Stewart A.M."/>
            <person name="Cotton M.D."/>
            <person name="Pratt M.S."/>
            <person name="Phillips C.A."/>
            <person name="Richardson D.L."/>
            <person name="Heidelberg J.F."/>
            <person name="Sutton G.G."/>
            <person name="Fleischmann R.D."/>
            <person name="Eisen J.A."/>
            <person name="White O."/>
            <person name="Salzberg S.L."/>
            <person name="Smith H.O."/>
            <person name="Venter J.C."/>
            <person name="Fraser C.M."/>
        </authorList>
    </citation>
    <scope>NUCLEOTIDE SEQUENCE [LARGE SCALE GENOMIC DNA]</scope>
    <source>
        <strain>ATCC 43589 / DSM 3109 / JCM 10099 / NBRC 100826 / MSB8</strain>
    </source>
</reference>
<protein>
    <recommendedName>
        <fullName evidence="1">Demethylmenaquinone methyltransferase</fullName>
        <ecNumber evidence="1">2.1.1.163</ecNumber>
    </recommendedName>
</protein>
<comment type="function">
    <text evidence="1">Methyltransferase required for the conversion of demethylmenaquinol (DMKH2) to menaquinol (MKH2).</text>
</comment>
<comment type="catalytic activity">
    <reaction evidence="1">
        <text>a 2-demethylmenaquinol + S-adenosyl-L-methionine = a menaquinol + S-adenosyl-L-homocysteine + H(+)</text>
        <dbReference type="Rhea" id="RHEA:42640"/>
        <dbReference type="Rhea" id="RHEA-COMP:9539"/>
        <dbReference type="Rhea" id="RHEA-COMP:9563"/>
        <dbReference type="ChEBI" id="CHEBI:15378"/>
        <dbReference type="ChEBI" id="CHEBI:18151"/>
        <dbReference type="ChEBI" id="CHEBI:55437"/>
        <dbReference type="ChEBI" id="CHEBI:57856"/>
        <dbReference type="ChEBI" id="CHEBI:59789"/>
        <dbReference type="EC" id="2.1.1.163"/>
    </reaction>
</comment>
<comment type="pathway">
    <text evidence="1">Quinol/quinone metabolism; menaquinone biosynthesis; menaquinol from 1,4-dihydroxy-2-naphthoate: step 2/2.</text>
</comment>
<comment type="similarity">
    <text evidence="1">Belongs to the class I-like SAM-binding methyltransferase superfamily. MenG/UbiE family.</text>
</comment>
<dbReference type="EC" id="2.1.1.163" evidence="1"/>
<dbReference type="EMBL" id="AE000512">
    <property type="protein sequence ID" value="AAD35835.1"/>
    <property type="molecule type" value="Genomic_DNA"/>
</dbReference>
<dbReference type="PIR" id="G72337">
    <property type="entry name" value="G72337"/>
</dbReference>
<dbReference type="RefSeq" id="NP_228562.1">
    <property type="nucleotide sequence ID" value="NC_000853.1"/>
</dbReference>
<dbReference type="SMR" id="Q9WZL2"/>
<dbReference type="FunCoup" id="Q9WZL2">
    <property type="interactions" value="392"/>
</dbReference>
<dbReference type="STRING" id="243274.TM_0753"/>
<dbReference type="PaxDb" id="243274-THEMA_00885"/>
<dbReference type="DNASU" id="898421"/>
<dbReference type="EnsemblBacteria" id="AAD35835">
    <property type="protein sequence ID" value="AAD35835"/>
    <property type="gene ID" value="TM_0753"/>
</dbReference>
<dbReference type="KEGG" id="tma:TM0753"/>
<dbReference type="KEGG" id="tmi:THEMA_00885"/>
<dbReference type="PATRIC" id="fig|243274.18.peg.173"/>
<dbReference type="eggNOG" id="COG2226">
    <property type="taxonomic scope" value="Bacteria"/>
</dbReference>
<dbReference type="InParanoid" id="Q9WZL2"/>
<dbReference type="OrthoDB" id="9808140at2"/>
<dbReference type="UniPathway" id="UPA00079">
    <property type="reaction ID" value="UER00169"/>
</dbReference>
<dbReference type="Proteomes" id="UP000008183">
    <property type="component" value="Chromosome"/>
</dbReference>
<dbReference type="GO" id="GO:0043770">
    <property type="term" value="F:demethylmenaquinone methyltransferase activity"/>
    <property type="evidence" value="ECO:0007669"/>
    <property type="project" value="UniProtKB-UniRule"/>
</dbReference>
<dbReference type="GO" id="GO:0008168">
    <property type="term" value="F:methyltransferase activity"/>
    <property type="evidence" value="ECO:0000318"/>
    <property type="project" value="GO_Central"/>
</dbReference>
<dbReference type="GO" id="GO:0009234">
    <property type="term" value="P:menaquinone biosynthetic process"/>
    <property type="evidence" value="ECO:0007669"/>
    <property type="project" value="UniProtKB-UniRule"/>
</dbReference>
<dbReference type="GO" id="GO:0032259">
    <property type="term" value="P:methylation"/>
    <property type="evidence" value="ECO:0007669"/>
    <property type="project" value="UniProtKB-KW"/>
</dbReference>
<dbReference type="CDD" id="cd02440">
    <property type="entry name" value="AdoMet_MTases"/>
    <property type="match status" value="1"/>
</dbReference>
<dbReference type="Gene3D" id="3.40.50.150">
    <property type="entry name" value="Vaccinia Virus protein VP39"/>
    <property type="match status" value="1"/>
</dbReference>
<dbReference type="HAMAP" id="MF_01813">
    <property type="entry name" value="MenG_UbiE_methyltr"/>
    <property type="match status" value="1"/>
</dbReference>
<dbReference type="InterPro" id="IPR029063">
    <property type="entry name" value="SAM-dependent_MTases_sf"/>
</dbReference>
<dbReference type="InterPro" id="IPR004033">
    <property type="entry name" value="UbiE/COQ5_MeTrFase"/>
</dbReference>
<dbReference type="InterPro" id="IPR023576">
    <property type="entry name" value="UbiE/COQ5_MeTrFase_CS"/>
</dbReference>
<dbReference type="NCBIfam" id="TIGR01934">
    <property type="entry name" value="MenG_MenH_UbiE"/>
    <property type="match status" value="1"/>
</dbReference>
<dbReference type="NCBIfam" id="NF001244">
    <property type="entry name" value="PRK00216.1-5"/>
    <property type="match status" value="1"/>
</dbReference>
<dbReference type="PANTHER" id="PTHR43591:SF24">
    <property type="entry name" value="2-METHOXY-6-POLYPRENYL-1,4-BENZOQUINOL METHYLASE, MITOCHONDRIAL"/>
    <property type="match status" value="1"/>
</dbReference>
<dbReference type="PANTHER" id="PTHR43591">
    <property type="entry name" value="METHYLTRANSFERASE"/>
    <property type="match status" value="1"/>
</dbReference>
<dbReference type="Pfam" id="PF01209">
    <property type="entry name" value="Ubie_methyltran"/>
    <property type="match status" value="1"/>
</dbReference>
<dbReference type="SUPFAM" id="SSF53335">
    <property type="entry name" value="S-adenosyl-L-methionine-dependent methyltransferases"/>
    <property type="match status" value="1"/>
</dbReference>
<dbReference type="PROSITE" id="PS51608">
    <property type="entry name" value="SAM_MT_UBIE"/>
    <property type="match status" value="1"/>
</dbReference>
<dbReference type="PROSITE" id="PS01183">
    <property type="entry name" value="UBIE_1"/>
    <property type="match status" value="1"/>
</dbReference>
<organism>
    <name type="scientific">Thermotoga maritima (strain ATCC 43589 / DSM 3109 / JCM 10099 / NBRC 100826 / MSB8)</name>
    <dbReference type="NCBI Taxonomy" id="243274"/>
    <lineage>
        <taxon>Bacteria</taxon>
        <taxon>Thermotogati</taxon>
        <taxon>Thermotogota</taxon>
        <taxon>Thermotogae</taxon>
        <taxon>Thermotogales</taxon>
        <taxon>Thermotogaceae</taxon>
        <taxon>Thermotoga</taxon>
    </lineage>
</organism>
<accession>Q9WZL2</accession>
<proteinExistence type="inferred from homology"/>
<sequence>MGGKTKKHAMRLFDRIAEKYDLLNRILSFGMDTKWRKRVVELILEVNPEKVLDLATGTGDVARLLKRKAPHLEITGLDSSSKMLEIAEKRLKDGEFIVGDAHNLPFYDRSFDAITVAFGFRNFSDRRRVLRECRRVLKRKGRLVILELLPPNTKRFTGKIYSFYLKTWVPFVGGLFSGDFHAYRYLSTSVLNFLTPDQIVEMMKEEGFEVSFEPLFFSVAGIFIGDLIW</sequence>
<gene>
    <name evidence="1" type="primary">menG</name>
    <name type="ordered locus">TM_0753</name>
</gene>
<keyword id="KW-0474">Menaquinone biosynthesis</keyword>
<keyword id="KW-0489">Methyltransferase</keyword>
<keyword id="KW-1185">Reference proteome</keyword>
<keyword id="KW-0949">S-adenosyl-L-methionine</keyword>
<keyword id="KW-0808">Transferase</keyword>
<name>MENG_THEMA</name>
<evidence type="ECO:0000255" key="1">
    <source>
        <dbReference type="HAMAP-Rule" id="MF_01813"/>
    </source>
</evidence>
<feature type="chain" id="PRO_0000193343" description="Demethylmenaquinone methyltransferase">
    <location>
        <begin position="1"/>
        <end position="229"/>
    </location>
</feature>
<feature type="binding site" evidence="1">
    <location>
        <position position="58"/>
    </location>
    <ligand>
        <name>S-adenosyl-L-methionine</name>
        <dbReference type="ChEBI" id="CHEBI:59789"/>
    </ligand>
</feature>
<feature type="binding site" evidence="1">
    <location>
        <position position="78"/>
    </location>
    <ligand>
        <name>S-adenosyl-L-methionine</name>
        <dbReference type="ChEBI" id="CHEBI:59789"/>
    </ligand>
</feature>
<feature type="binding site" evidence="1">
    <location>
        <begin position="100"/>
        <end position="101"/>
    </location>
    <ligand>
        <name>S-adenosyl-L-methionine</name>
        <dbReference type="ChEBI" id="CHEBI:59789"/>
    </ligand>
</feature>